<sequence length="298" mass="32809">MRNTILFGVSMILLANLCFGIMSAFVKITADYFSPMENVFYRSITMTLLLLLIYPFKPYRLKSYKQGGFKKLAFRVVVGGLAMLAFFYNIEKISLATATAFSQCAPIYTVLLSPLLLKEKLKRSALISACIGLVGVVLISDPSVENVGLVEIIMGILSGIFVSLAYITLRDLREYYDKQAVILAFAFGMSLLGLAGMFIDIPFLSTGVHIPRKEDILWISLIGISGTLGQYFLTYAYMNAPAGIIAPIEYTRIVWGLLFGLYLGDTFLDLKSSLGVALILCSGLLIALPALLKELKKI</sequence>
<evidence type="ECO:0000255" key="1"/>
<evidence type="ECO:0000305" key="2"/>
<organism>
    <name type="scientific">Helicobacter pylori (strain J99 / ATCC 700824)</name>
    <name type="common">Campylobacter pylori J99</name>
    <dbReference type="NCBI Taxonomy" id="85963"/>
    <lineage>
        <taxon>Bacteria</taxon>
        <taxon>Pseudomonadati</taxon>
        <taxon>Campylobacterota</taxon>
        <taxon>Epsilonproteobacteria</taxon>
        <taxon>Campylobacterales</taxon>
        <taxon>Helicobacteraceae</taxon>
        <taxon>Helicobacter</taxon>
    </lineage>
</organism>
<name>YC34_HELPJ</name>
<protein>
    <recommendedName>
        <fullName>Uncharacterized transporter jhp_1155</fullName>
    </recommendedName>
</protein>
<feature type="chain" id="PRO_0000108194" description="Uncharacterized transporter jhp_1155">
    <location>
        <begin position="1"/>
        <end position="298"/>
    </location>
</feature>
<feature type="transmembrane region" description="Helical" evidence="1">
    <location>
        <begin position="5"/>
        <end position="25"/>
    </location>
</feature>
<feature type="transmembrane region" description="Helical" evidence="1">
    <location>
        <begin position="36"/>
        <end position="56"/>
    </location>
</feature>
<feature type="transmembrane region" description="Helical" evidence="1">
    <location>
        <begin position="76"/>
        <end position="96"/>
    </location>
</feature>
<feature type="transmembrane region" description="Helical" evidence="1">
    <location>
        <begin position="97"/>
        <end position="117"/>
    </location>
</feature>
<feature type="transmembrane region" description="Helical" evidence="1">
    <location>
        <begin position="124"/>
        <end position="144"/>
    </location>
</feature>
<feature type="transmembrane region" description="Helical" evidence="1">
    <location>
        <begin position="147"/>
        <end position="167"/>
    </location>
</feature>
<feature type="transmembrane region" description="Helical" evidence="1">
    <location>
        <begin position="181"/>
        <end position="201"/>
    </location>
</feature>
<feature type="transmembrane region" description="Helical" evidence="1">
    <location>
        <begin position="216"/>
        <end position="236"/>
    </location>
</feature>
<feature type="transmembrane region" description="Helical" evidence="1">
    <location>
        <begin position="244"/>
        <end position="264"/>
    </location>
</feature>
<feature type="transmembrane region" description="Helical" evidence="1">
    <location>
        <begin position="272"/>
        <end position="292"/>
    </location>
</feature>
<feature type="domain" description="EamA 1">
    <location>
        <begin position="17"/>
        <end position="141"/>
    </location>
</feature>
<feature type="domain" description="EamA 2">
    <location>
        <begin position="183"/>
        <end position="288"/>
    </location>
</feature>
<comment type="subcellular location">
    <subcellularLocation>
        <location evidence="2">Cell membrane</location>
        <topology evidence="2">Multi-pass membrane protein</topology>
    </subcellularLocation>
</comment>
<comment type="similarity">
    <text evidence="2">Belongs to the EamA transporter family.</text>
</comment>
<dbReference type="EMBL" id="AE001439">
    <property type="protein sequence ID" value="AAD06740.1"/>
    <property type="molecule type" value="Genomic_DNA"/>
</dbReference>
<dbReference type="PIR" id="G71841">
    <property type="entry name" value="G71841"/>
</dbReference>
<dbReference type="RefSeq" id="WP_001246324.1">
    <property type="nucleotide sequence ID" value="NC_000921.1"/>
</dbReference>
<dbReference type="SMR" id="Q9ZJZ2"/>
<dbReference type="KEGG" id="hpj:jhp_1155"/>
<dbReference type="eggNOG" id="COG0697">
    <property type="taxonomic scope" value="Bacteria"/>
</dbReference>
<dbReference type="Proteomes" id="UP000000804">
    <property type="component" value="Chromosome"/>
</dbReference>
<dbReference type="GO" id="GO:0005886">
    <property type="term" value="C:plasma membrane"/>
    <property type="evidence" value="ECO:0007669"/>
    <property type="project" value="UniProtKB-SubCell"/>
</dbReference>
<dbReference type="Gene3D" id="1.10.3730.20">
    <property type="match status" value="1"/>
</dbReference>
<dbReference type="InterPro" id="IPR000620">
    <property type="entry name" value="EamA_dom"/>
</dbReference>
<dbReference type="PANTHER" id="PTHR22911">
    <property type="entry name" value="ACYL-MALONYL CONDENSING ENZYME-RELATED"/>
    <property type="match status" value="1"/>
</dbReference>
<dbReference type="PANTHER" id="PTHR22911:SF6">
    <property type="entry name" value="SOLUTE CARRIER FAMILY 35 MEMBER G1"/>
    <property type="match status" value="1"/>
</dbReference>
<dbReference type="Pfam" id="PF00892">
    <property type="entry name" value="EamA"/>
    <property type="match status" value="2"/>
</dbReference>
<dbReference type="SUPFAM" id="SSF103481">
    <property type="entry name" value="Multidrug resistance efflux transporter EmrE"/>
    <property type="match status" value="2"/>
</dbReference>
<accession>Q9ZJZ2</accession>
<proteinExistence type="inferred from homology"/>
<reference key="1">
    <citation type="journal article" date="1999" name="Nature">
        <title>Genomic sequence comparison of two unrelated isolates of the human gastric pathogen Helicobacter pylori.</title>
        <authorList>
            <person name="Alm R.A."/>
            <person name="Ling L.-S.L."/>
            <person name="Moir D.T."/>
            <person name="King B.L."/>
            <person name="Brown E.D."/>
            <person name="Doig P.C."/>
            <person name="Smith D.R."/>
            <person name="Noonan B."/>
            <person name="Guild B.C."/>
            <person name="deJonge B.L."/>
            <person name="Carmel G."/>
            <person name="Tummino P.J."/>
            <person name="Caruso A."/>
            <person name="Uria-Nickelsen M."/>
            <person name="Mills D.M."/>
            <person name="Ives C."/>
            <person name="Gibson R."/>
            <person name="Merberg D."/>
            <person name="Mills S.D."/>
            <person name="Jiang Q."/>
            <person name="Taylor D.E."/>
            <person name="Vovis G.F."/>
            <person name="Trust T.J."/>
        </authorList>
    </citation>
    <scope>NUCLEOTIDE SEQUENCE [LARGE SCALE GENOMIC DNA]</scope>
    <source>
        <strain>J99 / ATCC 700824</strain>
    </source>
</reference>
<gene>
    <name type="ordered locus">jhp_1155</name>
</gene>
<keyword id="KW-1003">Cell membrane</keyword>
<keyword id="KW-0472">Membrane</keyword>
<keyword id="KW-0677">Repeat</keyword>
<keyword id="KW-0812">Transmembrane</keyword>
<keyword id="KW-1133">Transmembrane helix</keyword>
<keyword id="KW-0813">Transport</keyword>